<organism>
    <name type="scientific">Lactococcus lactis subsp. cremoris (strain MG1363)</name>
    <dbReference type="NCBI Taxonomy" id="416870"/>
    <lineage>
        <taxon>Bacteria</taxon>
        <taxon>Bacillati</taxon>
        <taxon>Bacillota</taxon>
        <taxon>Bacilli</taxon>
        <taxon>Lactobacillales</taxon>
        <taxon>Streptococcaceae</taxon>
        <taxon>Lactococcus</taxon>
        <taxon>Lactococcus cremoris subsp. cremoris</taxon>
    </lineage>
</organism>
<sequence>MDKFEKWLNKTLMPLASKMNKNHFISALSEAFMRCMPLTLGIALLTIIGYFPVPAWVDFLNSIGLAQHFSAVIGAVTSALAIYVTYNFAYSYVNRHEYNGHTAGLLSIASLLMLMPQIITVPVVKNIPTEFPKSAVVDSVSNVEAFQTVYTGSTGLIVAIIIGFIVSLVYIQLSKRNLVIKLPAGVPPMVVDSLSPAIISMVIFCLMFGIRVGFSYTPFHDIFNFSTQLIQAPLTGAVANPWVLMGIFTFGNFLWFFGIHPNLIGGILNPLLLTMSYANIDAYAAGKPVPYLQMMIVFAVGANAWGGSGNTYGLVISMFTAKSERYKQLLKLGAIPSIFNISEPLLFGLPMMLNPLFFIPLVFQPAILGTVALGLAKILYITNLNPMTALLPWTTPAPVRMAISGGLPFLIIFAICLVLNVLIYYPFFKVAYNKALEEEKAAVELEGSETA</sequence>
<dbReference type="EMBL" id="AM406671">
    <property type="protein sequence ID" value="CAL97555.1"/>
    <property type="molecule type" value="Genomic_DNA"/>
</dbReference>
<dbReference type="RefSeq" id="WP_011834904.1">
    <property type="nucleotide sequence ID" value="NC_009004.1"/>
</dbReference>
<dbReference type="SMR" id="A2RJV0"/>
<dbReference type="STRING" id="416870.llmg_0963"/>
<dbReference type="KEGG" id="llm:llmg_0963"/>
<dbReference type="eggNOG" id="COG1455">
    <property type="taxonomic scope" value="Bacteria"/>
</dbReference>
<dbReference type="HOGENOM" id="CLU_029688_1_0_9"/>
<dbReference type="OrthoDB" id="1550290at2"/>
<dbReference type="PhylomeDB" id="A2RJV0"/>
<dbReference type="Proteomes" id="UP000000364">
    <property type="component" value="Chromosome"/>
</dbReference>
<dbReference type="GO" id="GO:0005886">
    <property type="term" value="C:plasma membrane"/>
    <property type="evidence" value="ECO:0007669"/>
    <property type="project" value="UniProtKB-SubCell"/>
</dbReference>
<dbReference type="GO" id="GO:0008982">
    <property type="term" value="F:protein-N(PI)-phosphohistidine-sugar phosphotransferase activity"/>
    <property type="evidence" value="ECO:0007669"/>
    <property type="project" value="InterPro"/>
</dbReference>
<dbReference type="GO" id="GO:1901264">
    <property type="term" value="P:carbohydrate derivative transport"/>
    <property type="evidence" value="ECO:0007669"/>
    <property type="project" value="TreeGrafter"/>
</dbReference>
<dbReference type="GO" id="GO:0009401">
    <property type="term" value="P:phosphoenolpyruvate-dependent sugar phosphotransferase system"/>
    <property type="evidence" value="ECO:0007669"/>
    <property type="project" value="UniProtKB-KW"/>
</dbReference>
<dbReference type="InterPro" id="IPR003352">
    <property type="entry name" value="PTS_EIIC"/>
</dbReference>
<dbReference type="InterPro" id="IPR004501">
    <property type="entry name" value="PTS_EIIC_3"/>
</dbReference>
<dbReference type="InterPro" id="IPR004796">
    <property type="entry name" value="PTS_IIC_cello"/>
</dbReference>
<dbReference type="InterPro" id="IPR051088">
    <property type="entry name" value="PTS_Sugar-EIIC/EIIB"/>
</dbReference>
<dbReference type="NCBIfam" id="TIGR00410">
    <property type="entry name" value="lacE"/>
    <property type="match status" value="1"/>
</dbReference>
<dbReference type="PANTHER" id="PTHR33989">
    <property type="match status" value="1"/>
</dbReference>
<dbReference type="PANTHER" id="PTHR33989:SF8">
    <property type="entry name" value="PERMEASE IIC COMPONENT"/>
    <property type="match status" value="1"/>
</dbReference>
<dbReference type="Pfam" id="PF02378">
    <property type="entry name" value="PTS_EIIC"/>
    <property type="match status" value="1"/>
</dbReference>
<dbReference type="PIRSF" id="PIRSF006351">
    <property type="entry name" value="PTS_EIIC-Cellobiose"/>
    <property type="match status" value="1"/>
</dbReference>
<dbReference type="PROSITE" id="PS51105">
    <property type="entry name" value="PTS_EIIC_TYPE_3"/>
    <property type="match status" value="1"/>
</dbReference>
<proteinExistence type="inferred from homology"/>
<evidence type="ECO:0000250" key="1">
    <source>
        <dbReference type="UniProtKB" id="P17334"/>
    </source>
</evidence>
<evidence type="ECO:0000255" key="2">
    <source>
        <dbReference type="PROSITE-ProRule" id="PRU00428"/>
    </source>
</evidence>
<evidence type="ECO:0000269" key="3">
    <source>
    </source>
</evidence>
<evidence type="ECO:0000305" key="4"/>
<evidence type="ECO:0000312" key="5">
    <source>
        <dbReference type="EMBL" id="CAL97555.1"/>
    </source>
</evidence>
<gene>
    <name evidence="5" type="ordered locus">llmg_0963</name>
</gene>
<reference key="1">
    <citation type="journal article" date="2007" name="J. Bacteriol.">
        <title>The complete genome sequence of the lactic acid bacterial paradigm Lactococcus lactis subsp. cremoris MG1363.</title>
        <authorList>
            <person name="Wegmann U."/>
            <person name="O'Connell-Motherway M."/>
            <person name="Zomer A."/>
            <person name="Buist G."/>
            <person name="Shearman C."/>
            <person name="Canchaya C."/>
            <person name="Ventura M."/>
            <person name="Goesmann A."/>
            <person name="Gasson M.J."/>
            <person name="Kuipers O.P."/>
            <person name="van Sinderen D."/>
            <person name="Kok J."/>
        </authorList>
    </citation>
    <scope>NUCLEOTIDE SEQUENCE [LARGE SCALE GENOMIC DNA]</scope>
    <source>
        <strain>MG1363</strain>
    </source>
</reference>
<reference key="2">
    <citation type="journal article" date="2018" name="Front. Microbiol.">
        <title>Further elucidation of galactose utilization in Lactococcus lactis MG1363.</title>
        <authorList>
            <person name="Solopova A."/>
            <person name="Bachmann H."/>
            <person name="Teusink B."/>
            <person name="Kok J."/>
            <person name="Kuipers O.P."/>
        </authorList>
    </citation>
    <scope>FUNCTION</scope>
    <scope>DISRUPTION PHENOTYPE</scope>
    <source>
        <strain>MG1363</strain>
    </source>
</reference>
<accession>A2RJV0</accession>
<comment type="function">
    <text evidence="1 3">The phosphoenolpyruvate-dependent sugar phosphotransferase system (PTS), a major carbohydrate active transport system, catalyzes the phosphorylation of incoming sugar substrates concomitant with their translocation across the cell membrane (By similarity). Involved in galactose transport with PtcA and PtcB (PubMed:30123211).</text>
</comment>
<comment type="subcellular location">
    <subcellularLocation>
        <location evidence="2">Cell membrane</location>
        <topology evidence="2">Multi-pass membrane protein</topology>
    </subcellularLocation>
</comment>
<comment type="domain">
    <text evidence="2">The EIIC type-3 domain forms the PTS system translocation channel and contains the specific substrate-binding site.</text>
</comment>
<comment type="disruption phenotype">
    <text evidence="3">The galP/llmg_0963 double mutant grows poorly on galactose.</text>
</comment>
<keyword id="KW-1003">Cell membrane</keyword>
<keyword id="KW-0472">Membrane</keyword>
<keyword id="KW-0598">Phosphotransferase system</keyword>
<keyword id="KW-0762">Sugar transport</keyword>
<keyword id="KW-0812">Transmembrane</keyword>
<keyword id="KW-1133">Transmembrane helix</keyword>
<keyword id="KW-0813">Transport</keyword>
<protein>
    <recommendedName>
        <fullName evidence="4">PTS system galactose-specific EIIC component</fullName>
    </recommendedName>
</protein>
<name>GPIIC_LACLM</name>
<feature type="chain" id="PRO_0000446880" description="PTS system galactose-specific EIIC component">
    <location>
        <begin position="1"/>
        <end position="451"/>
    </location>
</feature>
<feature type="transmembrane region" description="Helical" evidence="2">
    <location>
        <begin position="40"/>
        <end position="60"/>
    </location>
</feature>
<feature type="transmembrane region" description="Helical" evidence="2">
    <location>
        <begin position="69"/>
        <end position="89"/>
    </location>
</feature>
<feature type="transmembrane region" description="Helical" evidence="2">
    <location>
        <begin position="104"/>
        <end position="124"/>
    </location>
</feature>
<feature type="transmembrane region" description="Helical" evidence="2">
    <location>
        <begin position="151"/>
        <end position="171"/>
    </location>
</feature>
<feature type="transmembrane region" description="Helical" evidence="2">
    <location>
        <begin position="190"/>
        <end position="210"/>
    </location>
</feature>
<feature type="transmembrane region" description="Helical" evidence="2">
    <location>
        <begin position="239"/>
        <end position="259"/>
    </location>
</feature>
<feature type="transmembrane region" description="Helical" evidence="2">
    <location>
        <begin position="263"/>
        <end position="283"/>
    </location>
</feature>
<feature type="transmembrane region" description="Helical" evidence="2">
    <location>
        <begin position="296"/>
        <end position="316"/>
    </location>
</feature>
<feature type="transmembrane region" description="Helical" evidence="2">
    <location>
        <begin position="332"/>
        <end position="352"/>
    </location>
</feature>
<feature type="transmembrane region" description="Helical" evidence="2">
    <location>
        <begin position="356"/>
        <end position="376"/>
    </location>
</feature>
<feature type="transmembrane region" description="Helical" evidence="2">
    <location>
        <begin position="403"/>
        <end position="423"/>
    </location>
</feature>
<feature type="domain" description="PTS EIIC type-3" evidence="2">
    <location>
        <begin position="8"/>
        <end position="427"/>
    </location>
</feature>